<protein>
    <recommendedName>
        <fullName evidence="1">Large ribosomal subunit protein uL2</fullName>
    </recommendedName>
    <alternativeName>
        <fullName evidence="3">50S ribosomal protein L2</fullName>
    </alternativeName>
</protein>
<keyword id="KW-0687">Ribonucleoprotein</keyword>
<keyword id="KW-0689">Ribosomal protein</keyword>
<keyword id="KW-0694">RNA-binding</keyword>
<keyword id="KW-0699">rRNA-binding</keyword>
<proteinExistence type="inferred from homology"/>
<organism>
    <name type="scientific">Rhizobium rhizogenes (strain K84 / ATCC BAA-868)</name>
    <name type="common">Agrobacterium radiobacter</name>
    <dbReference type="NCBI Taxonomy" id="311403"/>
    <lineage>
        <taxon>Bacteria</taxon>
        <taxon>Pseudomonadati</taxon>
        <taxon>Pseudomonadota</taxon>
        <taxon>Alphaproteobacteria</taxon>
        <taxon>Hyphomicrobiales</taxon>
        <taxon>Rhizobiaceae</taxon>
        <taxon>Rhizobium/Agrobacterium group</taxon>
        <taxon>Rhizobium</taxon>
    </lineage>
</organism>
<reference key="1">
    <citation type="journal article" date="2009" name="J. Bacteriol.">
        <title>Genome sequences of three Agrobacterium biovars help elucidate the evolution of multichromosome genomes in bacteria.</title>
        <authorList>
            <person name="Slater S.C."/>
            <person name="Goldman B.S."/>
            <person name="Goodner B."/>
            <person name="Setubal J.C."/>
            <person name="Farrand S.K."/>
            <person name="Nester E.W."/>
            <person name="Burr T.J."/>
            <person name="Banta L."/>
            <person name="Dickerman A.W."/>
            <person name="Paulsen I."/>
            <person name="Otten L."/>
            <person name="Suen G."/>
            <person name="Welch R."/>
            <person name="Almeida N.F."/>
            <person name="Arnold F."/>
            <person name="Burton O.T."/>
            <person name="Du Z."/>
            <person name="Ewing A."/>
            <person name="Godsy E."/>
            <person name="Heisel S."/>
            <person name="Houmiel K.L."/>
            <person name="Jhaveri J."/>
            <person name="Lu J."/>
            <person name="Miller N.M."/>
            <person name="Norton S."/>
            <person name="Chen Q."/>
            <person name="Phoolcharoen W."/>
            <person name="Ohlin V."/>
            <person name="Ondrusek D."/>
            <person name="Pride N."/>
            <person name="Stricklin S.L."/>
            <person name="Sun J."/>
            <person name="Wheeler C."/>
            <person name="Wilson L."/>
            <person name="Zhu H."/>
            <person name="Wood D.W."/>
        </authorList>
    </citation>
    <scope>NUCLEOTIDE SEQUENCE [LARGE SCALE GENOMIC DNA]</scope>
    <source>
        <strain>K84 / ATCC BAA-868</strain>
    </source>
</reference>
<accession>B9JDT1</accession>
<comment type="function">
    <text evidence="1">One of the primary rRNA binding proteins. Required for association of the 30S and 50S subunits to form the 70S ribosome, for tRNA binding and peptide bond formation. It has been suggested to have peptidyltransferase activity; this is somewhat controversial. Makes several contacts with the 16S rRNA in the 70S ribosome.</text>
</comment>
<comment type="subunit">
    <text evidence="1">Part of the 50S ribosomal subunit. Forms a bridge to the 30S subunit in the 70S ribosome.</text>
</comment>
<comment type="similarity">
    <text evidence="1">Belongs to the universal ribosomal protein uL2 family.</text>
</comment>
<gene>
    <name evidence="1" type="primary">rplB</name>
    <name type="ordered locus">Arad_1975</name>
</gene>
<name>RL2_RHIR8</name>
<dbReference type="EMBL" id="CP000628">
    <property type="protein sequence ID" value="ACM26282.1"/>
    <property type="molecule type" value="Genomic_DNA"/>
</dbReference>
<dbReference type="RefSeq" id="WP_007690756.1">
    <property type="nucleotide sequence ID" value="NC_011985.1"/>
</dbReference>
<dbReference type="SMR" id="B9JDT1"/>
<dbReference type="STRING" id="311403.Arad_1975"/>
<dbReference type="GeneID" id="86848170"/>
<dbReference type="KEGG" id="ara:Arad_1975"/>
<dbReference type="eggNOG" id="COG0090">
    <property type="taxonomic scope" value="Bacteria"/>
</dbReference>
<dbReference type="HOGENOM" id="CLU_036235_2_1_5"/>
<dbReference type="Proteomes" id="UP000001600">
    <property type="component" value="Chromosome 1"/>
</dbReference>
<dbReference type="GO" id="GO:0015934">
    <property type="term" value="C:large ribosomal subunit"/>
    <property type="evidence" value="ECO:0007669"/>
    <property type="project" value="InterPro"/>
</dbReference>
<dbReference type="GO" id="GO:0019843">
    <property type="term" value="F:rRNA binding"/>
    <property type="evidence" value="ECO:0007669"/>
    <property type="project" value="UniProtKB-UniRule"/>
</dbReference>
<dbReference type="GO" id="GO:0003735">
    <property type="term" value="F:structural constituent of ribosome"/>
    <property type="evidence" value="ECO:0007669"/>
    <property type="project" value="InterPro"/>
</dbReference>
<dbReference type="GO" id="GO:0016740">
    <property type="term" value="F:transferase activity"/>
    <property type="evidence" value="ECO:0007669"/>
    <property type="project" value="InterPro"/>
</dbReference>
<dbReference type="GO" id="GO:0002181">
    <property type="term" value="P:cytoplasmic translation"/>
    <property type="evidence" value="ECO:0007669"/>
    <property type="project" value="TreeGrafter"/>
</dbReference>
<dbReference type="FunFam" id="2.30.30.30:FF:000001">
    <property type="entry name" value="50S ribosomal protein L2"/>
    <property type="match status" value="1"/>
</dbReference>
<dbReference type="FunFam" id="2.40.50.140:FF:000003">
    <property type="entry name" value="50S ribosomal protein L2"/>
    <property type="match status" value="1"/>
</dbReference>
<dbReference type="FunFam" id="4.10.950.10:FF:000001">
    <property type="entry name" value="50S ribosomal protein L2"/>
    <property type="match status" value="1"/>
</dbReference>
<dbReference type="Gene3D" id="2.30.30.30">
    <property type="match status" value="1"/>
</dbReference>
<dbReference type="Gene3D" id="2.40.50.140">
    <property type="entry name" value="Nucleic acid-binding proteins"/>
    <property type="match status" value="1"/>
</dbReference>
<dbReference type="Gene3D" id="4.10.950.10">
    <property type="entry name" value="Ribosomal protein L2, domain 3"/>
    <property type="match status" value="1"/>
</dbReference>
<dbReference type="HAMAP" id="MF_01320_B">
    <property type="entry name" value="Ribosomal_uL2_B"/>
    <property type="match status" value="1"/>
</dbReference>
<dbReference type="InterPro" id="IPR012340">
    <property type="entry name" value="NA-bd_OB-fold"/>
</dbReference>
<dbReference type="InterPro" id="IPR014722">
    <property type="entry name" value="Rib_uL2_dom2"/>
</dbReference>
<dbReference type="InterPro" id="IPR002171">
    <property type="entry name" value="Ribosomal_uL2"/>
</dbReference>
<dbReference type="InterPro" id="IPR005880">
    <property type="entry name" value="Ribosomal_uL2_bac/org-type"/>
</dbReference>
<dbReference type="InterPro" id="IPR022669">
    <property type="entry name" value="Ribosomal_uL2_C"/>
</dbReference>
<dbReference type="InterPro" id="IPR022671">
    <property type="entry name" value="Ribosomal_uL2_CS"/>
</dbReference>
<dbReference type="InterPro" id="IPR014726">
    <property type="entry name" value="Ribosomal_uL2_dom3"/>
</dbReference>
<dbReference type="InterPro" id="IPR022666">
    <property type="entry name" value="Ribosomal_uL2_RNA-bd_dom"/>
</dbReference>
<dbReference type="InterPro" id="IPR008991">
    <property type="entry name" value="Translation_prot_SH3-like_sf"/>
</dbReference>
<dbReference type="NCBIfam" id="TIGR01171">
    <property type="entry name" value="rplB_bact"/>
    <property type="match status" value="1"/>
</dbReference>
<dbReference type="PANTHER" id="PTHR13691:SF5">
    <property type="entry name" value="LARGE RIBOSOMAL SUBUNIT PROTEIN UL2M"/>
    <property type="match status" value="1"/>
</dbReference>
<dbReference type="PANTHER" id="PTHR13691">
    <property type="entry name" value="RIBOSOMAL PROTEIN L2"/>
    <property type="match status" value="1"/>
</dbReference>
<dbReference type="Pfam" id="PF00181">
    <property type="entry name" value="Ribosomal_L2"/>
    <property type="match status" value="1"/>
</dbReference>
<dbReference type="Pfam" id="PF03947">
    <property type="entry name" value="Ribosomal_L2_C"/>
    <property type="match status" value="1"/>
</dbReference>
<dbReference type="PIRSF" id="PIRSF002158">
    <property type="entry name" value="Ribosomal_L2"/>
    <property type="match status" value="1"/>
</dbReference>
<dbReference type="SMART" id="SM01383">
    <property type="entry name" value="Ribosomal_L2"/>
    <property type="match status" value="1"/>
</dbReference>
<dbReference type="SMART" id="SM01382">
    <property type="entry name" value="Ribosomal_L2_C"/>
    <property type="match status" value="1"/>
</dbReference>
<dbReference type="SUPFAM" id="SSF50249">
    <property type="entry name" value="Nucleic acid-binding proteins"/>
    <property type="match status" value="1"/>
</dbReference>
<dbReference type="SUPFAM" id="SSF50104">
    <property type="entry name" value="Translation proteins SH3-like domain"/>
    <property type="match status" value="1"/>
</dbReference>
<dbReference type="PROSITE" id="PS00467">
    <property type="entry name" value="RIBOSOMAL_L2"/>
    <property type="match status" value="1"/>
</dbReference>
<sequence length="278" mass="30431">MALKTFNPTTPSQRQLVIVDRSSLYKGKPVKSLTEGLSSKGGRNNTGRITVRFQGGGHKRTYRLVDFKRRKFDVEATVERIEYDPNRTAYIALVKYADGDQAYILAPQRLAAGDKVIASEKAVDVKPGNTMPLQFIPVGSIIHNVEMKPGKGGQIARSAGGYAQLVGRDQGMAILRLNSGEQRLVHGTCLATIGAVSNPDHGNINDGKAGRSRWRGKKPHVRGVVMNPVDHPHGGGEGRTSGGRHPVTPWGKPTKGKRTRSNKSTDKMIMRSRHQRKK</sequence>
<feature type="chain" id="PRO_1000165713" description="Large ribosomal subunit protein uL2">
    <location>
        <begin position="1"/>
        <end position="278"/>
    </location>
</feature>
<feature type="region of interest" description="Disordered" evidence="2">
    <location>
        <begin position="201"/>
        <end position="278"/>
    </location>
</feature>
<feature type="compositionally biased region" description="Basic residues" evidence="2">
    <location>
        <begin position="210"/>
        <end position="221"/>
    </location>
</feature>
<evidence type="ECO:0000255" key="1">
    <source>
        <dbReference type="HAMAP-Rule" id="MF_01320"/>
    </source>
</evidence>
<evidence type="ECO:0000256" key="2">
    <source>
        <dbReference type="SAM" id="MobiDB-lite"/>
    </source>
</evidence>
<evidence type="ECO:0000305" key="3"/>